<proteinExistence type="inferred from homology"/>
<comment type="function">
    <text evidence="1">Catalyzes the reductive methylation of 2'-deoxyuridine-5'-monophosphate (dUMP) to 2'-deoxythymidine-5'-monophosphate (dTMP) while utilizing 5,10-methylenetetrahydrofolate (mTHF) as the methyl donor and reductant in the reaction, yielding dihydrofolate (DHF) as a by-product. This enzymatic reaction provides an intracellular de novo source of dTMP, an essential precursor for DNA biosynthesis.</text>
</comment>
<comment type="catalytic activity">
    <reaction evidence="1">
        <text>dUMP + (6R)-5,10-methylene-5,6,7,8-tetrahydrofolate = 7,8-dihydrofolate + dTMP</text>
        <dbReference type="Rhea" id="RHEA:12104"/>
        <dbReference type="ChEBI" id="CHEBI:15636"/>
        <dbReference type="ChEBI" id="CHEBI:57451"/>
        <dbReference type="ChEBI" id="CHEBI:63528"/>
        <dbReference type="ChEBI" id="CHEBI:246422"/>
        <dbReference type="EC" id="2.1.1.45"/>
    </reaction>
</comment>
<comment type="pathway">
    <text evidence="1">Pyrimidine metabolism; dTTP biosynthesis.</text>
</comment>
<comment type="subunit">
    <text evidence="1">Homodimer.</text>
</comment>
<comment type="subcellular location">
    <subcellularLocation>
        <location evidence="1">Cytoplasm</location>
    </subcellularLocation>
</comment>
<comment type="similarity">
    <text evidence="1">Belongs to the thymidylate synthase family. Bacterial-type ThyA subfamily.</text>
</comment>
<sequence>MSEQVYLDLARTILEEGHYKGDRTNTGTYSLFGYQMRFNLQEGFPLLTTKKMPFGLIKSELLWFLKGDSNIRYLLQHNNHIWDEWAFERFVKSTDYTGPDMTDFSHRAQDDADFKVVYQEQMRLFNDRILADEGFAKQYGELGDIYGKQWRAWQTRSGETIDQIKNVIEMIKTNPDSRRLIVSAWNPEDVPSMALPPCHTMFQFYVNDGKLSCQLYQRSGDVFLGVPFNIASYALLTHLIAHETGLEVGEFIHTLGDAHIYSNHVTQVKTQLARSMHAAPKLWLNPDKKSIFDFDVADIKVENYESEPAIKAPVAV</sequence>
<reference key="1">
    <citation type="journal article" date="2005" name="Nat. Biotechnol.">
        <title>The complete genome sequence of the meat-borne lactic acid bacterium Lactobacillus sakei 23K.</title>
        <authorList>
            <person name="Chaillou S."/>
            <person name="Champomier-Verges M.-C."/>
            <person name="Cornet M."/>
            <person name="Crutz-Le Coq A.-M."/>
            <person name="Dudez A.-M."/>
            <person name="Martin V."/>
            <person name="Beaufils S."/>
            <person name="Darbon-Rongere E."/>
            <person name="Bossy R."/>
            <person name="Loux V."/>
            <person name="Zagorec M."/>
        </authorList>
    </citation>
    <scope>NUCLEOTIDE SEQUENCE [LARGE SCALE GENOMIC DNA]</scope>
    <source>
        <strain>23K</strain>
    </source>
</reference>
<accession>Q38WX8</accession>
<protein>
    <recommendedName>
        <fullName evidence="1">Thymidylate synthase</fullName>
        <shortName evidence="1">TS</shortName>
        <shortName evidence="1">TSase</shortName>
        <ecNumber evidence="1">2.1.1.45</ecNumber>
    </recommendedName>
</protein>
<organism>
    <name type="scientific">Latilactobacillus sakei subsp. sakei (strain 23K)</name>
    <name type="common">Lactobacillus sakei subsp. sakei</name>
    <dbReference type="NCBI Taxonomy" id="314315"/>
    <lineage>
        <taxon>Bacteria</taxon>
        <taxon>Bacillati</taxon>
        <taxon>Bacillota</taxon>
        <taxon>Bacilli</taxon>
        <taxon>Lactobacillales</taxon>
        <taxon>Lactobacillaceae</taxon>
        <taxon>Latilactobacillus</taxon>
    </lineage>
</organism>
<feature type="chain" id="PRO_1000000619" description="Thymidylate synthase">
    <location>
        <begin position="1"/>
        <end position="316"/>
    </location>
</feature>
<feature type="active site" description="Nucleophile" evidence="1">
    <location>
        <position position="198"/>
    </location>
</feature>
<feature type="binding site" description="in other chain" evidence="1">
    <location>
        <position position="23"/>
    </location>
    <ligand>
        <name>dUMP</name>
        <dbReference type="ChEBI" id="CHEBI:246422"/>
        <note>ligand shared between dimeric partners</note>
    </ligand>
</feature>
<feature type="binding site" evidence="1">
    <location>
        <begin position="178"/>
        <end position="179"/>
    </location>
    <ligand>
        <name>dUMP</name>
        <dbReference type="ChEBI" id="CHEBI:246422"/>
        <note>ligand shared between dimeric partners</note>
    </ligand>
</feature>
<feature type="binding site" description="in other chain" evidence="1">
    <location>
        <begin position="218"/>
        <end position="221"/>
    </location>
    <ligand>
        <name>dUMP</name>
        <dbReference type="ChEBI" id="CHEBI:246422"/>
        <note>ligand shared between dimeric partners</note>
    </ligand>
</feature>
<feature type="binding site" evidence="1">
    <location>
        <position position="221"/>
    </location>
    <ligand>
        <name>(6R)-5,10-methylene-5,6,7,8-tetrahydrofolate</name>
        <dbReference type="ChEBI" id="CHEBI:15636"/>
    </ligand>
</feature>
<feature type="binding site" description="in other chain" evidence="1">
    <location>
        <position position="229"/>
    </location>
    <ligand>
        <name>dUMP</name>
        <dbReference type="ChEBI" id="CHEBI:246422"/>
        <note>ligand shared between dimeric partners</note>
    </ligand>
</feature>
<feature type="binding site" description="in other chain" evidence="1">
    <location>
        <begin position="259"/>
        <end position="261"/>
    </location>
    <ligand>
        <name>dUMP</name>
        <dbReference type="ChEBI" id="CHEBI:246422"/>
        <note>ligand shared between dimeric partners</note>
    </ligand>
</feature>
<feature type="binding site" evidence="1">
    <location>
        <position position="315"/>
    </location>
    <ligand>
        <name>(6R)-5,10-methylene-5,6,7,8-tetrahydrofolate</name>
        <dbReference type="ChEBI" id="CHEBI:15636"/>
    </ligand>
</feature>
<dbReference type="EC" id="2.1.1.45" evidence="1"/>
<dbReference type="EMBL" id="CR936503">
    <property type="protein sequence ID" value="CAI55303.1"/>
    <property type="molecule type" value="Genomic_DNA"/>
</dbReference>
<dbReference type="RefSeq" id="WP_011374703.1">
    <property type="nucleotide sequence ID" value="NC_007576.1"/>
</dbReference>
<dbReference type="SMR" id="Q38WX8"/>
<dbReference type="STRING" id="314315.LCA_1001"/>
<dbReference type="KEGG" id="lsa:LCA_1001"/>
<dbReference type="eggNOG" id="COG0207">
    <property type="taxonomic scope" value="Bacteria"/>
</dbReference>
<dbReference type="HOGENOM" id="CLU_021669_0_2_9"/>
<dbReference type="OrthoDB" id="9774633at2"/>
<dbReference type="UniPathway" id="UPA00575"/>
<dbReference type="Proteomes" id="UP000002707">
    <property type="component" value="Chromosome"/>
</dbReference>
<dbReference type="GO" id="GO:0005829">
    <property type="term" value="C:cytosol"/>
    <property type="evidence" value="ECO:0007669"/>
    <property type="project" value="TreeGrafter"/>
</dbReference>
<dbReference type="GO" id="GO:0004799">
    <property type="term" value="F:thymidylate synthase activity"/>
    <property type="evidence" value="ECO:0007669"/>
    <property type="project" value="UniProtKB-UniRule"/>
</dbReference>
<dbReference type="GO" id="GO:0006231">
    <property type="term" value="P:dTMP biosynthetic process"/>
    <property type="evidence" value="ECO:0007669"/>
    <property type="project" value="UniProtKB-UniRule"/>
</dbReference>
<dbReference type="GO" id="GO:0006235">
    <property type="term" value="P:dTTP biosynthetic process"/>
    <property type="evidence" value="ECO:0007669"/>
    <property type="project" value="UniProtKB-UniRule"/>
</dbReference>
<dbReference type="GO" id="GO:0032259">
    <property type="term" value="P:methylation"/>
    <property type="evidence" value="ECO:0007669"/>
    <property type="project" value="UniProtKB-KW"/>
</dbReference>
<dbReference type="CDD" id="cd00351">
    <property type="entry name" value="TS_Pyrimidine_HMase"/>
    <property type="match status" value="1"/>
</dbReference>
<dbReference type="Gene3D" id="3.30.572.10">
    <property type="entry name" value="Thymidylate synthase/dCMP hydroxymethylase domain"/>
    <property type="match status" value="1"/>
</dbReference>
<dbReference type="HAMAP" id="MF_00008">
    <property type="entry name" value="Thymidy_synth_bact"/>
    <property type="match status" value="1"/>
</dbReference>
<dbReference type="InterPro" id="IPR045097">
    <property type="entry name" value="Thymidate_synth/dCMP_Mease"/>
</dbReference>
<dbReference type="InterPro" id="IPR023451">
    <property type="entry name" value="Thymidate_synth/dCMP_Mease_dom"/>
</dbReference>
<dbReference type="InterPro" id="IPR036926">
    <property type="entry name" value="Thymidate_synth/dCMP_Mease_sf"/>
</dbReference>
<dbReference type="InterPro" id="IPR000398">
    <property type="entry name" value="Thymidylate_synthase"/>
</dbReference>
<dbReference type="InterPro" id="IPR020940">
    <property type="entry name" value="Thymidylate_synthase_AS"/>
</dbReference>
<dbReference type="NCBIfam" id="NF002496">
    <property type="entry name" value="PRK01827.1-2"/>
    <property type="match status" value="1"/>
</dbReference>
<dbReference type="NCBIfam" id="TIGR03284">
    <property type="entry name" value="thym_sym"/>
    <property type="match status" value="1"/>
</dbReference>
<dbReference type="PANTHER" id="PTHR11548:SF9">
    <property type="entry name" value="THYMIDYLATE SYNTHASE"/>
    <property type="match status" value="1"/>
</dbReference>
<dbReference type="PANTHER" id="PTHR11548">
    <property type="entry name" value="THYMIDYLATE SYNTHASE 1"/>
    <property type="match status" value="1"/>
</dbReference>
<dbReference type="Pfam" id="PF00303">
    <property type="entry name" value="Thymidylat_synt"/>
    <property type="match status" value="1"/>
</dbReference>
<dbReference type="PRINTS" id="PR00108">
    <property type="entry name" value="THYMDSNTHASE"/>
</dbReference>
<dbReference type="SUPFAM" id="SSF55831">
    <property type="entry name" value="Thymidylate synthase/dCMP hydroxymethylase"/>
    <property type="match status" value="1"/>
</dbReference>
<dbReference type="PROSITE" id="PS00091">
    <property type="entry name" value="THYMIDYLATE_SYNTHASE"/>
    <property type="match status" value="1"/>
</dbReference>
<name>TYSY_LATSS</name>
<keyword id="KW-0963">Cytoplasm</keyword>
<keyword id="KW-0489">Methyltransferase</keyword>
<keyword id="KW-0545">Nucleotide biosynthesis</keyword>
<keyword id="KW-1185">Reference proteome</keyword>
<keyword id="KW-0808">Transferase</keyword>
<gene>
    <name evidence="1" type="primary">thyA</name>
    <name type="ordered locus">LCA_1001</name>
</gene>
<evidence type="ECO:0000255" key="1">
    <source>
        <dbReference type="HAMAP-Rule" id="MF_00008"/>
    </source>
</evidence>